<proteinExistence type="evidence at transcript level"/>
<comment type="subcellular location">
    <subcellularLocation>
        <location evidence="3">Secreted</location>
    </subcellularLocation>
</comment>
<comment type="similarity">
    <text evidence="3">Belongs to the cystatin family.</text>
</comment>
<sequence length="126" mass="14688">MFLKATLLLGLAVLGMHVWAIQMEFVDISKDLDYFVVSVEFAVAWFNSDNTEEQAYKLLEVRRAQQKSWTMIYLMELDLGRTICKKHDEDIDNCPLQESPGERKVNCTFIVDSRPWFTQFTLLNST</sequence>
<reference key="1">
    <citation type="submission" date="2005-11" db="EMBL/GenBank/DDBJ databases">
        <authorList>
            <consortium name="NIH - Mammalian Gene Collection (MGC) project"/>
        </authorList>
    </citation>
    <scope>NUCLEOTIDE SEQUENCE [LARGE SCALE MRNA]</scope>
    <source>
        <strain>Crossbred X Angus</strain>
        <tissue>Liver</tissue>
    </source>
</reference>
<name>CST16_BOVIN</name>
<accession>Q32KQ9</accession>
<organism>
    <name type="scientific">Bos taurus</name>
    <name type="common">Bovine</name>
    <dbReference type="NCBI Taxonomy" id="9913"/>
    <lineage>
        <taxon>Eukaryota</taxon>
        <taxon>Metazoa</taxon>
        <taxon>Chordata</taxon>
        <taxon>Craniata</taxon>
        <taxon>Vertebrata</taxon>
        <taxon>Euteleostomi</taxon>
        <taxon>Mammalia</taxon>
        <taxon>Eutheria</taxon>
        <taxon>Laurasiatheria</taxon>
        <taxon>Artiodactyla</taxon>
        <taxon>Ruminantia</taxon>
        <taxon>Pecora</taxon>
        <taxon>Bovidae</taxon>
        <taxon>Bovinae</taxon>
        <taxon>Bos</taxon>
    </lineage>
</organism>
<feature type="signal peptide" evidence="2">
    <location>
        <begin position="1"/>
        <end position="20"/>
    </location>
</feature>
<feature type="chain" id="PRO_0000285802" description="Probable cystatin-16">
    <location>
        <begin position="21"/>
        <end position="126"/>
    </location>
</feature>
<feature type="glycosylation site" description="N-linked (GlcNAc...) asparagine" evidence="2">
    <location>
        <position position="106"/>
    </location>
</feature>
<feature type="disulfide bond" evidence="1">
    <location>
        <begin position="84"/>
        <end position="94"/>
    </location>
</feature>
<evidence type="ECO:0000250" key="1"/>
<evidence type="ECO:0000255" key="2"/>
<evidence type="ECO:0000305" key="3"/>
<dbReference type="EMBL" id="BC109970">
    <property type="protein sequence ID" value="AAI09971.1"/>
    <property type="molecule type" value="mRNA"/>
</dbReference>
<dbReference type="RefSeq" id="NP_001033211.1">
    <property type="nucleotide sequence ID" value="NM_001038122.2"/>
</dbReference>
<dbReference type="SMR" id="Q32KQ9"/>
<dbReference type="FunCoup" id="Q32KQ9">
    <property type="interactions" value="1"/>
</dbReference>
<dbReference type="STRING" id="9913.ENSBTAP00000017853"/>
<dbReference type="GlyGen" id="Q32KQ9">
    <property type="glycosylation" value="1 site"/>
</dbReference>
<dbReference type="PaxDb" id="9913-ENSBTAP00000017853"/>
<dbReference type="GeneID" id="515992"/>
<dbReference type="KEGG" id="bta:515992"/>
<dbReference type="eggNOG" id="ENOG502TDK9">
    <property type="taxonomic scope" value="Eukaryota"/>
</dbReference>
<dbReference type="InParanoid" id="Q32KQ9"/>
<dbReference type="OrthoDB" id="9829654at2759"/>
<dbReference type="Proteomes" id="UP000009136">
    <property type="component" value="Unplaced"/>
</dbReference>
<dbReference type="GO" id="GO:0005576">
    <property type="term" value="C:extracellular region"/>
    <property type="evidence" value="ECO:0007669"/>
    <property type="project" value="UniProtKB-SubCell"/>
</dbReference>
<dbReference type="GO" id="GO:0004869">
    <property type="term" value="F:cysteine-type endopeptidase inhibitor activity"/>
    <property type="evidence" value="ECO:0007669"/>
    <property type="project" value="UniProtKB-KW"/>
</dbReference>
<dbReference type="CDD" id="cd00042">
    <property type="entry name" value="CY"/>
    <property type="match status" value="1"/>
</dbReference>
<dbReference type="Gene3D" id="3.10.450.10">
    <property type="match status" value="1"/>
</dbReference>
<dbReference type="InterPro" id="IPR000010">
    <property type="entry name" value="Cystatin_dom"/>
</dbReference>
<dbReference type="InterPro" id="IPR046350">
    <property type="entry name" value="Cystatin_sf"/>
</dbReference>
<dbReference type="InterPro" id="IPR052333">
    <property type="entry name" value="Cystatin_spermatogenesis"/>
</dbReference>
<dbReference type="PANTHER" id="PTHR47393">
    <property type="entry name" value="CYSTATIN-12-RELATED"/>
    <property type="match status" value="1"/>
</dbReference>
<dbReference type="PANTHER" id="PTHR47393:SF5">
    <property type="entry name" value="CYSTATIN-16-RELATED"/>
    <property type="match status" value="1"/>
</dbReference>
<dbReference type="Pfam" id="PF00031">
    <property type="entry name" value="Cystatin"/>
    <property type="match status" value="1"/>
</dbReference>
<dbReference type="SMART" id="SM00043">
    <property type="entry name" value="CY"/>
    <property type="match status" value="1"/>
</dbReference>
<dbReference type="SUPFAM" id="SSF54403">
    <property type="entry name" value="Cystatin/monellin"/>
    <property type="match status" value="1"/>
</dbReference>
<protein>
    <recommendedName>
        <fullName>Probable cystatin-16</fullName>
    </recommendedName>
</protein>
<keyword id="KW-1015">Disulfide bond</keyword>
<keyword id="KW-0325">Glycoprotein</keyword>
<keyword id="KW-0646">Protease inhibitor</keyword>
<keyword id="KW-1185">Reference proteome</keyword>
<keyword id="KW-0964">Secreted</keyword>
<keyword id="KW-0732">Signal</keyword>
<keyword id="KW-0789">Thiol protease inhibitor</keyword>